<accession>A0KGD3</accession>
<comment type="catalytic activity">
    <reaction evidence="1">
        <text>(2R)-3-phosphoglycerate + ATP = (2R)-3-phospho-glyceroyl phosphate + ADP</text>
        <dbReference type="Rhea" id="RHEA:14801"/>
        <dbReference type="ChEBI" id="CHEBI:30616"/>
        <dbReference type="ChEBI" id="CHEBI:57604"/>
        <dbReference type="ChEBI" id="CHEBI:58272"/>
        <dbReference type="ChEBI" id="CHEBI:456216"/>
        <dbReference type="EC" id="2.7.2.3"/>
    </reaction>
</comment>
<comment type="pathway">
    <text evidence="1">Carbohydrate degradation; glycolysis; pyruvate from D-glyceraldehyde 3-phosphate: step 2/5.</text>
</comment>
<comment type="subunit">
    <text evidence="1">Monomer.</text>
</comment>
<comment type="subcellular location">
    <subcellularLocation>
        <location evidence="1">Cytoplasm</location>
    </subcellularLocation>
</comment>
<comment type="similarity">
    <text evidence="1">Belongs to the phosphoglycerate kinase family.</text>
</comment>
<feature type="chain" id="PRO_1000057953" description="Phosphoglycerate kinase">
    <location>
        <begin position="1"/>
        <end position="387"/>
    </location>
</feature>
<feature type="binding site" evidence="1">
    <location>
        <begin position="21"/>
        <end position="23"/>
    </location>
    <ligand>
        <name>substrate</name>
    </ligand>
</feature>
<feature type="binding site" evidence="1">
    <location>
        <position position="36"/>
    </location>
    <ligand>
        <name>substrate</name>
    </ligand>
</feature>
<feature type="binding site" evidence="1">
    <location>
        <begin position="59"/>
        <end position="62"/>
    </location>
    <ligand>
        <name>substrate</name>
    </ligand>
</feature>
<feature type="binding site" evidence="1">
    <location>
        <position position="113"/>
    </location>
    <ligand>
        <name>substrate</name>
    </ligand>
</feature>
<feature type="binding site" evidence="1">
    <location>
        <position position="146"/>
    </location>
    <ligand>
        <name>substrate</name>
    </ligand>
</feature>
<feature type="binding site" evidence="1">
    <location>
        <position position="197"/>
    </location>
    <ligand>
        <name>ATP</name>
        <dbReference type="ChEBI" id="CHEBI:30616"/>
    </ligand>
</feature>
<feature type="binding site" evidence="1">
    <location>
        <position position="314"/>
    </location>
    <ligand>
        <name>ATP</name>
        <dbReference type="ChEBI" id="CHEBI:30616"/>
    </ligand>
</feature>
<feature type="binding site" evidence="1">
    <location>
        <begin position="340"/>
        <end position="343"/>
    </location>
    <ligand>
        <name>ATP</name>
        <dbReference type="ChEBI" id="CHEBI:30616"/>
    </ligand>
</feature>
<protein>
    <recommendedName>
        <fullName evidence="1">Phosphoglycerate kinase</fullName>
        <ecNumber evidence="1">2.7.2.3</ecNumber>
    </recommendedName>
</protein>
<reference key="1">
    <citation type="journal article" date="2006" name="J. Bacteriol.">
        <title>Genome sequence of Aeromonas hydrophila ATCC 7966T: jack of all trades.</title>
        <authorList>
            <person name="Seshadri R."/>
            <person name="Joseph S.W."/>
            <person name="Chopra A.K."/>
            <person name="Sha J."/>
            <person name="Shaw J."/>
            <person name="Graf J."/>
            <person name="Haft D.H."/>
            <person name="Wu M."/>
            <person name="Ren Q."/>
            <person name="Rosovitz M.J."/>
            <person name="Madupu R."/>
            <person name="Tallon L."/>
            <person name="Kim M."/>
            <person name="Jin S."/>
            <person name="Vuong H."/>
            <person name="Stine O.C."/>
            <person name="Ali A."/>
            <person name="Horneman A.J."/>
            <person name="Heidelberg J.F."/>
        </authorList>
    </citation>
    <scope>NUCLEOTIDE SEQUENCE [LARGE SCALE GENOMIC DNA]</scope>
    <source>
        <strain>ATCC 7966 / DSM 30187 / BCRC 13018 / CCUG 14551 / JCM 1027 / KCTC 2358 / NCIMB 9240 / NCTC 8049</strain>
    </source>
</reference>
<name>PGK_AERHH</name>
<organism>
    <name type="scientific">Aeromonas hydrophila subsp. hydrophila (strain ATCC 7966 / DSM 30187 / BCRC 13018 / CCUG 14551 / JCM 1027 / KCTC 2358 / NCIMB 9240 / NCTC 8049)</name>
    <dbReference type="NCBI Taxonomy" id="380703"/>
    <lineage>
        <taxon>Bacteria</taxon>
        <taxon>Pseudomonadati</taxon>
        <taxon>Pseudomonadota</taxon>
        <taxon>Gammaproteobacteria</taxon>
        <taxon>Aeromonadales</taxon>
        <taxon>Aeromonadaceae</taxon>
        <taxon>Aeromonas</taxon>
    </lineage>
</organism>
<gene>
    <name evidence="1" type="primary">pgk</name>
    <name type="ordered locus">AHA_0781</name>
</gene>
<sequence length="387" mass="40443">MSVIKMTDLDLAGKRVLIRADLNVPVKDGKVTSDARIVATLPTIKLALEKGAKLMITSHLGRPTEGEYNEEFSLAPVVNYLKDALSCPVRLAKDYLDGVEVAAGELVVLENCRFNKGEKKNTEELAKKYAALCDVFVMDAFGTAHRAEGSTYGVAQFAPVACAGPLLAGELEALGKAMLKPERPMVAIVGGSKVSTKLTVLESLSKIADQLVVGGGIANTFIAAAGHNVGKSLCEHDLIDTAKKLAAETNIPVTTDVVVGAEFSESTPATIKSVADVTDGDMIFDIGPDSAKALADIIMNAKTILWNGPVGVFEFDQFAEGTKVIAEAIAASPAFSIAGGGDTLAAIDKFGIADKVSYISTGGGAFLEFVEGKVLPAVAILEQRAKA</sequence>
<proteinExistence type="inferred from homology"/>
<evidence type="ECO:0000255" key="1">
    <source>
        <dbReference type="HAMAP-Rule" id="MF_00145"/>
    </source>
</evidence>
<keyword id="KW-0067">ATP-binding</keyword>
<keyword id="KW-0963">Cytoplasm</keyword>
<keyword id="KW-0324">Glycolysis</keyword>
<keyword id="KW-0418">Kinase</keyword>
<keyword id="KW-0547">Nucleotide-binding</keyword>
<keyword id="KW-1185">Reference proteome</keyword>
<keyword id="KW-0808">Transferase</keyword>
<dbReference type="EC" id="2.7.2.3" evidence="1"/>
<dbReference type="EMBL" id="CP000462">
    <property type="protein sequence ID" value="ABK39552.1"/>
    <property type="molecule type" value="Genomic_DNA"/>
</dbReference>
<dbReference type="RefSeq" id="WP_011704731.1">
    <property type="nucleotide sequence ID" value="NC_008570.1"/>
</dbReference>
<dbReference type="RefSeq" id="YP_855323.1">
    <property type="nucleotide sequence ID" value="NC_008570.1"/>
</dbReference>
<dbReference type="SMR" id="A0KGD3"/>
<dbReference type="STRING" id="380703.AHA_0781"/>
<dbReference type="EnsemblBacteria" id="ABK39552">
    <property type="protein sequence ID" value="ABK39552"/>
    <property type="gene ID" value="AHA_0781"/>
</dbReference>
<dbReference type="GeneID" id="4487941"/>
<dbReference type="KEGG" id="aha:AHA_0781"/>
<dbReference type="PATRIC" id="fig|380703.7.peg.779"/>
<dbReference type="eggNOG" id="COG0126">
    <property type="taxonomic scope" value="Bacteria"/>
</dbReference>
<dbReference type="HOGENOM" id="CLU_025427_0_2_6"/>
<dbReference type="OrthoDB" id="9808460at2"/>
<dbReference type="UniPathway" id="UPA00109">
    <property type="reaction ID" value="UER00185"/>
</dbReference>
<dbReference type="Proteomes" id="UP000000756">
    <property type="component" value="Chromosome"/>
</dbReference>
<dbReference type="GO" id="GO:0005829">
    <property type="term" value="C:cytosol"/>
    <property type="evidence" value="ECO:0007669"/>
    <property type="project" value="TreeGrafter"/>
</dbReference>
<dbReference type="GO" id="GO:0043531">
    <property type="term" value="F:ADP binding"/>
    <property type="evidence" value="ECO:0007669"/>
    <property type="project" value="TreeGrafter"/>
</dbReference>
<dbReference type="GO" id="GO:0005524">
    <property type="term" value="F:ATP binding"/>
    <property type="evidence" value="ECO:0007669"/>
    <property type="project" value="UniProtKB-KW"/>
</dbReference>
<dbReference type="GO" id="GO:0004618">
    <property type="term" value="F:phosphoglycerate kinase activity"/>
    <property type="evidence" value="ECO:0007669"/>
    <property type="project" value="UniProtKB-UniRule"/>
</dbReference>
<dbReference type="GO" id="GO:0006094">
    <property type="term" value="P:gluconeogenesis"/>
    <property type="evidence" value="ECO:0007669"/>
    <property type="project" value="TreeGrafter"/>
</dbReference>
<dbReference type="GO" id="GO:0006096">
    <property type="term" value="P:glycolytic process"/>
    <property type="evidence" value="ECO:0007669"/>
    <property type="project" value="UniProtKB-UniRule"/>
</dbReference>
<dbReference type="FunFam" id="3.40.50.1260:FF:000001">
    <property type="entry name" value="Phosphoglycerate kinase"/>
    <property type="match status" value="1"/>
</dbReference>
<dbReference type="FunFam" id="3.40.50.1260:FF:000002">
    <property type="entry name" value="Phosphoglycerate kinase"/>
    <property type="match status" value="1"/>
</dbReference>
<dbReference type="Gene3D" id="3.40.50.1260">
    <property type="entry name" value="Phosphoglycerate kinase, N-terminal domain"/>
    <property type="match status" value="2"/>
</dbReference>
<dbReference type="HAMAP" id="MF_00145">
    <property type="entry name" value="Phosphoglyc_kinase"/>
    <property type="match status" value="1"/>
</dbReference>
<dbReference type="InterPro" id="IPR001576">
    <property type="entry name" value="Phosphoglycerate_kinase"/>
</dbReference>
<dbReference type="InterPro" id="IPR015911">
    <property type="entry name" value="Phosphoglycerate_kinase_CS"/>
</dbReference>
<dbReference type="InterPro" id="IPR015824">
    <property type="entry name" value="Phosphoglycerate_kinase_N"/>
</dbReference>
<dbReference type="InterPro" id="IPR036043">
    <property type="entry name" value="Phosphoglycerate_kinase_sf"/>
</dbReference>
<dbReference type="PANTHER" id="PTHR11406">
    <property type="entry name" value="PHOSPHOGLYCERATE KINASE"/>
    <property type="match status" value="1"/>
</dbReference>
<dbReference type="PANTHER" id="PTHR11406:SF23">
    <property type="entry name" value="PHOSPHOGLYCERATE KINASE 1, CHLOROPLASTIC-RELATED"/>
    <property type="match status" value="1"/>
</dbReference>
<dbReference type="Pfam" id="PF00162">
    <property type="entry name" value="PGK"/>
    <property type="match status" value="1"/>
</dbReference>
<dbReference type="PIRSF" id="PIRSF000724">
    <property type="entry name" value="Pgk"/>
    <property type="match status" value="1"/>
</dbReference>
<dbReference type="PRINTS" id="PR00477">
    <property type="entry name" value="PHGLYCKINASE"/>
</dbReference>
<dbReference type="SUPFAM" id="SSF53748">
    <property type="entry name" value="Phosphoglycerate kinase"/>
    <property type="match status" value="1"/>
</dbReference>
<dbReference type="PROSITE" id="PS00111">
    <property type="entry name" value="PGLYCERATE_KINASE"/>
    <property type="match status" value="1"/>
</dbReference>